<gene>
    <name type="primary">BLS1</name>
    <name type="ORF">Kpol_1055p66</name>
</gene>
<protein>
    <recommendedName>
        <fullName>Biogenesis of lysosome-related organelles complex 1 subunit BLS1</fullName>
        <shortName>BLOC-1 subunit BLS1</shortName>
    </recommendedName>
    <alternativeName>
        <fullName>BLOS1-homolog</fullName>
    </alternativeName>
</protein>
<comment type="function">
    <text evidence="1">Component of the biogenesis of lysosome-related organelles complex-1 (BLOC-1), a complex involved in endosomal cargo sorting.</text>
</comment>
<comment type="subunit">
    <text evidence="1">Component of the biogenesis of lysosome-related organelles complex-1 (BLOC-1).</text>
</comment>
<comment type="subcellular location">
    <subcellularLocation>
        <location evidence="1">Endosome</location>
    </subcellularLocation>
</comment>
<comment type="similarity">
    <text evidence="3">Belongs to the BLOC1S1 family.</text>
</comment>
<accession>A7TGD9</accession>
<dbReference type="EMBL" id="DS480386">
    <property type="protein sequence ID" value="EDO18709.1"/>
    <property type="molecule type" value="Genomic_DNA"/>
</dbReference>
<dbReference type="RefSeq" id="XP_001646567.1">
    <property type="nucleotide sequence ID" value="XM_001646517.1"/>
</dbReference>
<dbReference type="FunCoup" id="A7TGD9">
    <property type="interactions" value="23"/>
</dbReference>
<dbReference type="STRING" id="436907.A7TGD9"/>
<dbReference type="GeneID" id="5547019"/>
<dbReference type="KEGG" id="vpo:Kpol_1055p66"/>
<dbReference type="eggNOG" id="ENOG502S787">
    <property type="taxonomic scope" value="Eukaryota"/>
</dbReference>
<dbReference type="HOGENOM" id="CLU_150164_0_0_1"/>
<dbReference type="InParanoid" id="A7TGD9"/>
<dbReference type="OMA" id="IEANHAY"/>
<dbReference type="OrthoDB" id="20018at2759"/>
<dbReference type="PhylomeDB" id="A7TGD9"/>
<dbReference type="Proteomes" id="UP000000267">
    <property type="component" value="Unassembled WGS sequence"/>
</dbReference>
<dbReference type="GO" id="GO:0031083">
    <property type="term" value="C:BLOC-1 complex"/>
    <property type="evidence" value="ECO:0007669"/>
    <property type="project" value="EnsemblFungi"/>
</dbReference>
<dbReference type="GO" id="GO:0005768">
    <property type="term" value="C:endosome"/>
    <property type="evidence" value="ECO:0007669"/>
    <property type="project" value="UniProtKB-SubCell"/>
</dbReference>
<dbReference type="GO" id="GO:0007032">
    <property type="term" value="P:endosome organization"/>
    <property type="evidence" value="ECO:0007669"/>
    <property type="project" value="EnsemblFungi"/>
</dbReference>
<dbReference type="GO" id="GO:0032880">
    <property type="term" value="P:regulation of protein localization"/>
    <property type="evidence" value="ECO:0007669"/>
    <property type="project" value="EnsemblFungi"/>
</dbReference>
<evidence type="ECO:0000250" key="1"/>
<evidence type="ECO:0000256" key="2">
    <source>
        <dbReference type="SAM" id="MobiDB-lite"/>
    </source>
</evidence>
<evidence type="ECO:0000305" key="3"/>
<sequence length="127" mass="14763">MSSKSELESLLNKIVKSNDETEVSKALKEIEDNNEYIEKKQLRSLLTMHDKKFKDQCLIPMNNLYVKYNDIVGKDRNLQNETAFVDRDIRVLESTLQYIIENKNSHNTNHGGCNKTKNSSKDKLLDK</sequence>
<feature type="chain" id="PRO_0000410632" description="Biogenesis of lysosome-related organelles complex 1 subunit BLS1">
    <location>
        <begin position="1"/>
        <end position="127"/>
    </location>
</feature>
<feature type="region of interest" description="Disordered" evidence="2">
    <location>
        <begin position="103"/>
        <end position="127"/>
    </location>
</feature>
<feature type="compositionally biased region" description="Polar residues" evidence="2">
    <location>
        <begin position="105"/>
        <end position="117"/>
    </location>
</feature>
<keyword id="KW-0967">Endosome</keyword>
<keyword id="KW-1185">Reference proteome</keyword>
<keyword id="KW-0813">Transport</keyword>
<reference key="1">
    <citation type="journal article" date="2007" name="Proc. Natl. Acad. Sci. U.S.A.">
        <title>Independent sorting-out of thousands of duplicated gene pairs in two yeast species descended from a whole-genome duplication.</title>
        <authorList>
            <person name="Scannell D.R."/>
            <person name="Frank A.C."/>
            <person name="Conant G.C."/>
            <person name="Byrne K.P."/>
            <person name="Woolfit M."/>
            <person name="Wolfe K.H."/>
        </authorList>
    </citation>
    <scope>NUCLEOTIDE SEQUENCE [LARGE SCALE GENOMIC DNA]</scope>
    <source>
        <strain>ATCC 22028 / DSM 70294 / BCRC 21397 / CBS 2163 / NBRC 10782 / NRRL Y-8283 / UCD 57-17</strain>
    </source>
</reference>
<organism>
    <name type="scientific">Vanderwaltozyma polyspora (strain ATCC 22028 / DSM 70294 / BCRC 21397 / CBS 2163 / NBRC 10782 / NRRL Y-8283 / UCD 57-17)</name>
    <name type="common">Kluyveromyces polysporus</name>
    <dbReference type="NCBI Taxonomy" id="436907"/>
    <lineage>
        <taxon>Eukaryota</taxon>
        <taxon>Fungi</taxon>
        <taxon>Dikarya</taxon>
        <taxon>Ascomycota</taxon>
        <taxon>Saccharomycotina</taxon>
        <taxon>Saccharomycetes</taxon>
        <taxon>Saccharomycetales</taxon>
        <taxon>Saccharomycetaceae</taxon>
        <taxon>Vanderwaltozyma</taxon>
    </lineage>
</organism>
<name>BL1S1_VANPO</name>
<proteinExistence type="inferred from homology"/>